<proteinExistence type="inferred from homology"/>
<protein>
    <recommendedName>
        <fullName evidence="2">ATP synthase subunit delta, organellar chromatophore</fullName>
    </recommendedName>
    <alternativeName>
        <fullName evidence="2">ATP synthase F(1) sector subunit delta</fullName>
    </alternativeName>
    <alternativeName>
        <fullName evidence="2">F-type ATPase subunit delta</fullName>
    </alternativeName>
</protein>
<accession>B1X3Y5</accession>
<sequence length="182" mass="19998">MPLLNSIATPYSEALLQVAEARGESEQTANQVKELLQIWESSPELRNAMTSQVLEPEAKKAALMKLFSEQLTPAFTNLLKLLADRKRISALEAVLLRFLELYRDIHRIALAEVTSAIPLNEEQKELLRKKIQVVAGTNNVELKLLVDPSMIGGFIVSVGSQVIDASLAGQVRRLGLALAKLG</sequence>
<evidence type="ECO:0000250" key="1"/>
<evidence type="ECO:0000255" key="2">
    <source>
        <dbReference type="HAMAP-Rule" id="MF_01416"/>
    </source>
</evidence>
<keyword id="KW-0066">ATP synthesis</keyword>
<keyword id="KW-0139">CF(1)</keyword>
<keyword id="KW-0375">Hydrogen ion transport</keyword>
<keyword id="KW-0406">Ion transport</keyword>
<keyword id="KW-0472">Membrane</keyword>
<keyword id="KW-0994">Organellar chromatophore</keyword>
<keyword id="KW-0934">Plastid</keyword>
<keyword id="KW-0793">Thylakoid</keyword>
<keyword id="KW-0813">Transport</keyword>
<feature type="chain" id="PRO_0000371210" description="ATP synthase subunit delta, organellar chromatophore">
    <location>
        <begin position="1"/>
        <end position="182"/>
    </location>
</feature>
<dbReference type="EMBL" id="CP000815">
    <property type="protein sequence ID" value="ACB42654.1"/>
    <property type="molecule type" value="Genomic_DNA"/>
</dbReference>
<dbReference type="RefSeq" id="YP_002048864.1">
    <property type="nucleotide sequence ID" value="NC_011087.1"/>
</dbReference>
<dbReference type="SMR" id="B1X3Y5"/>
<dbReference type="GeneID" id="6481244"/>
<dbReference type="GO" id="GO:0070118">
    <property type="term" value="C:organellar chromatophore thylakoid membrane"/>
    <property type="evidence" value="ECO:0007669"/>
    <property type="project" value="UniProtKB-SubCell"/>
</dbReference>
<dbReference type="GO" id="GO:0009536">
    <property type="term" value="C:plastid"/>
    <property type="evidence" value="ECO:0007669"/>
    <property type="project" value="UniProtKB-KW"/>
</dbReference>
<dbReference type="GO" id="GO:0045259">
    <property type="term" value="C:proton-transporting ATP synthase complex"/>
    <property type="evidence" value="ECO:0007669"/>
    <property type="project" value="UniProtKB-KW"/>
</dbReference>
<dbReference type="GO" id="GO:0046933">
    <property type="term" value="F:proton-transporting ATP synthase activity, rotational mechanism"/>
    <property type="evidence" value="ECO:0007669"/>
    <property type="project" value="InterPro"/>
</dbReference>
<dbReference type="Gene3D" id="1.10.520.20">
    <property type="entry name" value="N-terminal domain of the delta subunit of the F1F0-ATP synthase"/>
    <property type="match status" value="1"/>
</dbReference>
<dbReference type="HAMAP" id="MF_01416">
    <property type="entry name" value="ATP_synth_delta_bact"/>
    <property type="match status" value="1"/>
</dbReference>
<dbReference type="InterPro" id="IPR026015">
    <property type="entry name" value="ATP_synth_OSCP/delta_N_sf"/>
</dbReference>
<dbReference type="InterPro" id="IPR000711">
    <property type="entry name" value="ATPase_OSCP/dsu"/>
</dbReference>
<dbReference type="NCBIfam" id="TIGR01145">
    <property type="entry name" value="ATP_synt_delta"/>
    <property type="match status" value="1"/>
</dbReference>
<dbReference type="PANTHER" id="PTHR11910">
    <property type="entry name" value="ATP SYNTHASE DELTA CHAIN"/>
    <property type="match status" value="1"/>
</dbReference>
<dbReference type="Pfam" id="PF00213">
    <property type="entry name" value="OSCP"/>
    <property type="match status" value="1"/>
</dbReference>
<dbReference type="PRINTS" id="PR00125">
    <property type="entry name" value="ATPASEDELTA"/>
</dbReference>
<dbReference type="SUPFAM" id="SSF47928">
    <property type="entry name" value="N-terminal domain of the delta subunit of the F1F0-ATP synthase"/>
    <property type="match status" value="1"/>
</dbReference>
<comment type="function">
    <text evidence="2">F(1)F(0) ATP synthase produces ATP from ADP in the presence of a proton or sodium gradient. F-type ATPases consist of two structural domains, F(1) containing the extramembraneous catalytic core and F(0) containing the membrane proton channel, linked together by a central stalk and a peripheral stalk. During catalysis, ATP synthesis in the catalytic domain of F(1) is coupled via a rotary mechanism of the central stalk subunits to proton translocation.</text>
</comment>
<comment type="function">
    <text evidence="2">This protein is part of the stalk that links CF(0) to CF(1). It either transmits conformational changes from CF(0) to CF(1) or is implicated in proton conduction.</text>
</comment>
<comment type="subunit">
    <text evidence="2">F-type ATPases have 2 components, F(1) - the catalytic core - and F(0) - the membrane proton channel. F(1) has five subunits: alpha(3), beta(3), gamma(1), delta(1), epsilon(1). CF(0) has four main subunits: a(1), b(1), b'(1) and c(10-14). The alpha and beta chains form an alternating ring which encloses part of the gamma chain. F(1) is attached to F(0) by a central stalk formed by the gamma and epsilon chains, while a peripheral stalk is formed by the delta, b and b' chains.</text>
</comment>
<comment type="subcellular location">
    <subcellularLocation>
        <location evidence="1">Plastid</location>
        <location evidence="1">Organellar chromatophore thylakoid membrane</location>
        <topology evidence="2">Peripheral membrane protein</topology>
    </subcellularLocation>
</comment>
<comment type="similarity">
    <text evidence="2">Belongs to the ATPase delta chain family.</text>
</comment>
<gene>
    <name evidence="2" type="primary">atpD</name>
    <name type="ordered locus">PCC_0204</name>
</gene>
<reference key="1">
    <citation type="journal article" date="2008" name="Curr. Biol.">
        <title>Chromatophore genome sequence of Paulinella sheds light on acquisition of photosynthesis by eukaryotes.</title>
        <authorList>
            <person name="Nowack E.C.M."/>
            <person name="Melkonian M."/>
            <person name="Gloeckner G."/>
        </authorList>
    </citation>
    <scope>NUCLEOTIDE SEQUENCE [LARGE SCALE GENOMIC DNA]</scope>
</reference>
<geneLocation type="organellar chromatophore"/>
<name>ATPD_PAUCH</name>
<organism>
    <name type="scientific">Paulinella chromatophora</name>
    <dbReference type="NCBI Taxonomy" id="39717"/>
    <lineage>
        <taxon>Eukaryota</taxon>
        <taxon>Sar</taxon>
        <taxon>Rhizaria</taxon>
        <taxon>Cercozoa</taxon>
        <taxon>Imbricatea</taxon>
        <taxon>Silicofilosea</taxon>
        <taxon>Euglyphida</taxon>
        <taxon>Paulinellidae</taxon>
        <taxon>Paulinella</taxon>
    </lineage>
</organism>